<sequence>MASTLDLDKGCTVEELLRGCIEAFDDSGKVRDPQLVRMFLMMHPWYIPSSQLASKLLHFYQQSRKDNSNSLQVKTCHLVRYWVSAFPAEFDLNPELAEQIKELKALLDQEGNRRHSSLIDIESVPTYKWKRQVTQRNPVEQKKRKMSLLFDHLEPMELAEHLTYLEYRSFCKILFQDYHSFVTHGCTVDNPVLERFISLFNSVSQWVQLMILSKPTATQRALVITHFVHVAEKLLQLQNFNTLMAVVGGLSHSSISRLKETHSHVSPDTIKLWEGLTELVTATGNYSNYRRRLAACVGFRFPILGVHLKDLVALQLALPDWLDPGRTRLNGAKMRQLFSILEELAMVTSLRPPVQANPDLLSLLTVSLDQYQTEDELYQLSLQREPRSKSSPTSPTSCTPPPRPPVLEEWTSVAKPKLDQALVAEHIEKMVESVFRNFDVDGDGHISQEEFQIIRGNFPYLSAFGDLDQNQDGCISREEMISYFLRSSSVLGGRMGFVHNLQESNSLRPVACRHCKALILGIYKQGLKCRACGVNCHKQCKDRLSVECRRRAQSVSLEGSAPSPSPTHTHHRAFSFSLPRPGRRSSRPPEIREEEVQTVEDGVFDIHL</sequence>
<protein>
    <recommendedName>
        <fullName>RAS guanyl-releasing protein 2</fullName>
    </recommendedName>
    <alternativeName>
        <fullName>Calcium and DAG-regulated guanine nucleotide exchange factor I</fullName>
        <shortName>CalDAG-GEFI</shortName>
    </alternativeName>
</protein>
<reference key="1">
    <citation type="journal article" date="2004" name="Nature">
        <title>Genome sequence of the Brown Norway rat yields insights into mammalian evolution.</title>
        <authorList>
            <person name="Gibbs R.A."/>
            <person name="Weinstock G.M."/>
            <person name="Metzker M.L."/>
            <person name="Muzny D.M."/>
            <person name="Sodergren E.J."/>
            <person name="Scherer S."/>
            <person name="Scott G."/>
            <person name="Steffen D."/>
            <person name="Worley K.C."/>
            <person name="Burch P.E."/>
            <person name="Okwuonu G."/>
            <person name="Hines S."/>
            <person name="Lewis L."/>
            <person name="Deramo C."/>
            <person name="Delgado O."/>
            <person name="Dugan-Rocha S."/>
            <person name="Miner G."/>
            <person name="Morgan M."/>
            <person name="Hawes A."/>
            <person name="Gill R."/>
            <person name="Holt R.A."/>
            <person name="Adams M.D."/>
            <person name="Amanatides P.G."/>
            <person name="Baden-Tillson H."/>
            <person name="Barnstead M."/>
            <person name="Chin S."/>
            <person name="Evans C.A."/>
            <person name="Ferriera S."/>
            <person name="Fosler C."/>
            <person name="Glodek A."/>
            <person name="Gu Z."/>
            <person name="Jennings D."/>
            <person name="Kraft C.L."/>
            <person name="Nguyen T."/>
            <person name="Pfannkoch C.M."/>
            <person name="Sitter C."/>
            <person name="Sutton G.G."/>
            <person name="Venter J.C."/>
            <person name="Woodage T."/>
            <person name="Smith D."/>
            <person name="Lee H.-M."/>
            <person name="Gustafson E."/>
            <person name="Cahill P."/>
            <person name="Kana A."/>
            <person name="Doucette-Stamm L."/>
            <person name="Weinstock K."/>
            <person name="Fechtel K."/>
            <person name="Weiss R.B."/>
            <person name="Dunn D.M."/>
            <person name="Green E.D."/>
            <person name="Blakesley R.W."/>
            <person name="Bouffard G.G."/>
            <person name="De Jong P.J."/>
            <person name="Osoegawa K."/>
            <person name="Zhu B."/>
            <person name="Marra M."/>
            <person name="Schein J."/>
            <person name="Bosdet I."/>
            <person name="Fjell C."/>
            <person name="Jones S."/>
            <person name="Krzywinski M."/>
            <person name="Mathewson C."/>
            <person name="Siddiqui A."/>
            <person name="Wye N."/>
            <person name="McPherson J."/>
            <person name="Zhao S."/>
            <person name="Fraser C.M."/>
            <person name="Shetty J."/>
            <person name="Shatsman S."/>
            <person name="Geer K."/>
            <person name="Chen Y."/>
            <person name="Abramzon S."/>
            <person name="Nierman W.C."/>
            <person name="Havlak P.H."/>
            <person name="Chen R."/>
            <person name="Durbin K.J."/>
            <person name="Egan A."/>
            <person name="Ren Y."/>
            <person name="Song X.-Z."/>
            <person name="Li B."/>
            <person name="Liu Y."/>
            <person name="Qin X."/>
            <person name="Cawley S."/>
            <person name="Cooney A.J."/>
            <person name="D'Souza L.M."/>
            <person name="Martin K."/>
            <person name="Wu J.Q."/>
            <person name="Gonzalez-Garay M.L."/>
            <person name="Jackson A.R."/>
            <person name="Kalafus K.J."/>
            <person name="McLeod M.P."/>
            <person name="Milosavljevic A."/>
            <person name="Virk D."/>
            <person name="Volkov A."/>
            <person name="Wheeler D.A."/>
            <person name="Zhang Z."/>
            <person name="Bailey J.A."/>
            <person name="Eichler E.E."/>
            <person name="Tuzun E."/>
            <person name="Birney E."/>
            <person name="Mongin E."/>
            <person name="Ureta-Vidal A."/>
            <person name="Woodwark C."/>
            <person name="Zdobnov E."/>
            <person name="Bork P."/>
            <person name="Suyama M."/>
            <person name="Torrents D."/>
            <person name="Alexandersson M."/>
            <person name="Trask B.J."/>
            <person name="Young J.M."/>
            <person name="Huang H."/>
            <person name="Wang H."/>
            <person name="Xing H."/>
            <person name="Daniels S."/>
            <person name="Gietzen D."/>
            <person name="Schmidt J."/>
            <person name="Stevens K."/>
            <person name="Vitt U."/>
            <person name="Wingrove J."/>
            <person name="Camara F."/>
            <person name="Mar Alba M."/>
            <person name="Abril J.F."/>
            <person name="Guigo R."/>
            <person name="Smit A."/>
            <person name="Dubchak I."/>
            <person name="Rubin E.M."/>
            <person name="Couronne O."/>
            <person name="Poliakov A."/>
            <person name="Huebner N."/>
            <person name="Ganten D."/>
            <person name="Goesele C."/>
            <person name="Hummel O."/>
            <person name="Kreitler T."/>
            <person name="Lee Y.-A."/>
            <person name="Monti J."/>
            <person name="Schulz H."/>
            <person name="Zimdahl H."/>
            <person name="Himmelbauer H."/>
            <person name="Lehrach H."/>
            <person name="Jacob H.J."/>
            <person name="Bromberg S."/>
            <person name="Gullings-Handley J."/>
            <person name="Jensen-Seaman M.I."/>
            <person name="Kwitek A.E."/>
            <person name="Lazar J."/>
            <person name="Pasko D."/>
            <person name="Tonellato P.J."/>
            <person name="Twigger S."/>
            <person name="Ponting C.P."/>
            <person name="Duarte J.M."/>
            <person name="Rice S."/>
            <person name="Goodstadt L."/>
            <person name="Beatson S.A."/>
            <person name="Emes R.D."/>
            <person name="Winter E.E."/>
            <person name="Webber C."/>
            <person name="Brandt P."/>
            <person name="Nyakatura G."/>
            <person name="Adetobi M."/>
            <person name="Chiaromonte F."/>
            <person name="Elnitski L."/>
            <person name="Eswara P."/>
            <person name="Hardison R.C."/>
            <person name="Hou M."/>
            <person name="Kolbe D."/>
            <person name="Makova K."/>
            <person name="Miller W."/>
            <person name="Nekrutenko A."/>
            <person name="Riemer C."/>
            <person name="Schwartz S."/>
            <person name="Taylor J."/>
            <person name="Yang S."/>
            <person name="Zhang Y."/>
            <person name="Lindpaintner K."/>
            <person name="Andrews T.D."/>
            <person name="Caccamo M."/>
            <person name="Clamp M."/>
            <person name="Clarke L."/>
            <person name="Curwen V."/>
            <person name="Durbin R.M."/>
            <person name="Eyras E."/>
            <person name="Searle S.M."/>
            <person name="Cooper G.M."/>
            <person name="Batzoglou S."/>
            <person name="Brudno M."/>
            <person name="Sidow A."/>
            <person name="Stone E.A."/>
            <person name="Payseur B.A."/>
            <person name="Bourque G."/>
            <person name="Lopez-Otin C."/>
            <person name="Puente X.S."/>
            <person name="Chakrabarti K."/>
            <person name="Chatterji S."/>
            <person name="Dewey C."/>
            <person name="Pachter L."/>
            <person name="Bray N."/>
            <person name="Yap V.B."/>
            <person name="Caspi A."/>
            <person name="Tesler G."/>
            <person name="Pevzner P.A."/>
            <person name="Haussler D."/>
            <person name="Roskin K.M."/>
            <person name="Baertsch R."/>
            <person name="Clawson H."/>
            <person name="Furey T.S."/>
            <person name="Hinrichs A.S."/>
            <person name="Karolchik D."/>
            <person name="Kent W.J."/>
            <person name="Rosenbloom K.R."/>
            <person name="Trumbower H."/>
            <person name="Weirauch M."/>
            <person name="Cooper D.N."/>
            <person name="Stenson P.D."/>
            <person name="Ma B."/>
            <person name="Brent M."/>
            <person name="Arumugam M."/>
            <person name="Shteynberg D."/>
            <person name="Copley R.R."/>
            <person name="Taylor M.S."/>
            <person name="Riethman H."/>
            <person name="Mudunuri U."/>
            <person name="Peterson J."/>
            <person name="Guyer M."/>
            <person name="Felsenfeld A."/>
            <person name="Old S."/>
            <person name="Mockrin S."/>
            <person name="Collins F.S."/>
        </authorList>
    </citation>
    <scope>NUCLEOTIDE SEQUENCE [LARGE SCALE GENOMIC DNA]</scope>
    <source>
        <strain>Brown Norway</strain>
    </source>
</reference>
<reference key="2">
    <citation type="journal article" date="1998" name="Proc. Natl. Acad. Sci. U.S.A.">
        <title>A Rap guanine nucleotide exchange factor enriched highly in the basal ganglia.</title>
        <authorList>
            <person name="Kawasaki H."/>
            <person name="Springett G.M."/>
            <person name="Toki S."/>
            <person name="Canales J.J."/>
            <person name="Harlan P."/>
            <person name="Blumenstiel J.P."/>
            <person name="Chen E.J."/>
            <person name="Bany I.A."/>
            <person name="Mochizuki N."/>
            <person name="Ashbacher A."/>
            <person name="Matsuda M."/>
            <person name="Housman D.E."/>
            <person name="Graybiel A.M."/>
        </authorList>
    </citation>
    <scope>SUBCELLULAR LOCATION</scope>
    <scope>TISSUE SPECIFICITY</scope>
</reference>
<reference key="3">
    <citation type="journal article" date="2001" name="J. Biol. Chem.">
        <title>A CalDAG-GEFI/Rap1/B-Raf cassette couples M(1) muscarinic acetylcholine receptors to the activation of ERK1/2.</title>
        <authorList>
            <person name="Guo F.-F."/>
            <person name="Kumahara E."/>
            <person name="Saffen D."/>
        </authorList>
    </citation>
    <scope>FUNCTION</scope>
    <scope>IDENTIFICATION IN A COMPLEX WITH RAP1 AND BRAF</scope>
</reference>
<reference key="4">
    <citation type="journal article" date="2001" name="J. Comp. Neurol.">
        <title>Guanine nucleotide exchange factors CalDAG-GEFI and CalDAG-GEFII are colocalized in striatal projection neurons.</title>
        <authorList>
            <person name="Toki S."/>
            <person name="Kawasaki H."/>
            <person name="Tashiro N."/>
            <person name="Housman D.E."/>
            <person name="Graybiel A.M."/>
        </authorList>
    </citation>
    <scope>SUBCELLULAR LOCATION</scope>
    <scope>TISSUE SPECIFICITY</scope>
    <scope>DEVELOPMENTAL STAGE</scope>
</reference>
<reference key="5">
    <citation type="journal article" date="2012" name="Nat. Commun.">
        <title>Quantitative maps of protein phosphorylation sites across 14 different rat organs and tissues.</title>
        <authorList>
            <person name="Lundby A."/>
            <person name="Secher A."/>
            <person name="Lage K."/>
            <person name="Nordsborg N.B."/>
            <person name="Dmytriyev A."/>
            <person name="Lundby C."/>
            <person name="Olsen J.V."/>
        </authorList>
    </citation>
    <scope>PHOSPHORYLATION [LARGE SCALE ANALYSIS] AT SER-575</scope>
    <scope>IDENTIFICATION BY MASS SPECTROMETRY [LARGE SCALE ANALYSIS]</scope>
</reference>
<gene>
    <name type="primary">Rasgrp2</name>
</gene>
<comment type="function">
    <text evidence="2 9">Functions as a calcium- and DAG-regulated nucleotide exchange factor specifically activating Rap through the exchange of bound GDP for GTP. May also activate other GTPases such as RRAS, RRAS2, NRAS, KRAS but not HRAS. Functions in aggregation of platelets and adhesion of T-lymphocytes and neutrophils probably through inside-out integrin activation. May function in the muscarinic acetylcholine receptor M1/CHRM1 signaling pathway.</text>
</comment>
<comment type="subunit">
    <text evidence="1">Forms a signaling complex with RAP1 and BRAF. Interacts with F-actin (By similarity). Interacts with RAP1 (By similarity).</text>
</comment>
<comment type="subcellular location">
    <subcellularLocation>
        <location evidence="1">Cytoplasm</location>
        <location evidence="1">Cytosol</location>
    </subcellularLocation>
    <subcellularLocation>
        <location evidence="1">Cell membrane</location>
        <topology evidence="1">Peripheral membrane protein</topology>
    </subcellularLocation>
    <subcellularLocation>
        <location evidence="10 11">Synapse</location>
        <location evidence="10 11">Synaptosome</location>
    </subcellularLocation>
    <subcellularLocation>
        <location evidence="12">Cell projection</location>
        <location evidence="12">Ruffle membrane</location>
        <topology evidence="12">Peripheral membrane protein</topology>
    </subcellularLocation>
    <text evidence="1">Found both in the cytosol and associated with membranes (By similarity). Enriched at juxtamembrane areas and membrane ruffles (By similarity). Localizes to the cell bodies and axons of striatal neurons.</text>
</comment>
<comment type="tissue specificity">
    <text evidence="10 11">Expressed in striatal neurons (at protein level). Expressed in the hematopoietic system. Detected in olfactory structures and deep cortical layers of brain.</text>
</comment>
<comment type="domain">
    <text evidence="1">The N-terminal Ras-GEF domain mediates association with F-actin.</text>
</comment>
<comment type="similarity">
    <text evidence="12">Belongs to the RASGRP family.</text>
</comment>
<feature type="chain" id="PRO_0000315610" description="RAS guanyl-releasing protein 2">
    <location>
        <begin position="1"/>
        <end position="608"/>
    </location>
</feature>
<feature type="domain" description="N-terminal Ras-GEF" evidence="4">
    <location>
        <begin position="4"/>
        <end position="126"/>
    </location>
</feature>
<feature type="domain" description="Ras-GEF" evidence="5">
    <location>
        <begin position="154"/>
        <end position="387"/>
    </location>
</feature>
<feature type="domain" description="EF-hand 1" evidence="7">
    <location>
        <begin position="426"/>
        <end position="461"/>
    </location>
</feature>
<feature type="domain" description="EF-hand 2" evidence="7">
    <location>
        <begin position="463"/>
        <end position="490"/>
    </location>
</feature>
<feature type="zinc finger region" description="Phorbol-ester/DAG-type" evidence="6">
    <location>
        <begin position="498"/>
        <end position="548"/>
    </location>
</feature>
<feature type="region of interest" description="Disordered" evidence="8">
    <location>
        <begin position="382"/>
        <end position="405"/>
    </location>
</feature>
<feature type="region of interest" description="Disordered" evidence="8">
    <location>
        <begin position="555"/>
        <end position="596"/>
    </location>
</feature>
<feature type="binding site" evidence="7">
    <location>
        <position position="439"/>
    </location>
    <ligand>
        <name>Ca(2+)</name>
        <dbReference type="ChEBI" id="CHEBI:29108"/>
        <label>1</label>
    </ligand>
</feature>
<feature type="binding site" evidence="7">
    <location>
        <position position="441"/>
    </location>
    <ligand>
        <name>Ca(2+)</name>
        <dbReference type="ChEBI" id="CHEBI:29108"/>
        <label>1</label>
    </ligand>
</feature>
<feature type="binding site" evidence="7">
    <location>
        <position position="443"/>
    </location>
    <ligand>
        <name>Ca(2+)</name>
        <dbReference type="ChEBI" id="CHEBI:29108"/>
        <label>1</label>
    </ligand>
</feature>
<feature type="binding site" evidence="7">
    <location>
        <position position="445"/>
    </location>
    <ligand>
        <name>Ca(2+)</name>
        <dbReference type="ChEBI" id="CHEBI:29108"/>
        <label>1</label>
    </ligand>
</feature>
<feature type="binding site" evidence="7">
    <location>
        <position position="450"/>
    </location>
    <ligand>
        <name>Ca(2+)</name>
        <dbReference type="ChEBI" id="CHEBI:29108"/>
        <label>1</label>
    </ligand>
</feature>
<feature type="binding site" evidence="7">
    <location>
        <position position="468"/>
    </location>
    <ligand>
        <name>Ca(2+)</name>
        <dbReference type="ChEBI" id="CHEBI:29108"/>
        <label>2</label>
    </ligand>
</feature>
<feature type="binding site" evidence="7">
    <location>
        <position position="470"/>
    </location>
    <ligand>
        <name>Ca(2+)</name>
        <dbReference type="ChEBI" id="CHEBI:29108"/>
        <label>2</label>
    </ligand>
</feature>
<feature type="binding site" evidence="7">
    <location>
        <position position="472"/>
    </location>
    <ligand>
        <name>Ca(2+)</name>
        <dbReference type="ChEBI" id="CHEBI:29108"/>
        <label>2</label>
    </ligand>
</feature>
<feature type="binding site" evidence="7">
    <location>
        <position position="474"/>
    </location>
    <ligand>
        <name>Ca(2+)</name>
        <dbReference type="ChEBI" id="CHEBI:29108"/>
        <label>2</label>
    </ligand>
</feature>
<feature type="binding site" evidence="7">
    <location>
        <position position="479"/>
    </location>
    <ligand>
        <name>Ca(2+)</name>
        <dbReference type="ChEBI" id="CHEBI:29108"/>
        <label>2</label>
    </ligand>
</feature>
<feature type="modified residue" description="Phosphoserine" evidence="3">
    <location>
        <position position="116"/>
    </location>
</feature>
<feature type="modified residue" description="Phosphoserine" evidence="3">
    <location>
        <position position="117"/>
    </location>
</feature>
<feature type="modified residue" description="Phosphoserine" evidence="3">
    <location>
        <position position="147"/>
    </location>
</feature>
<feature type="modified residue" description="Phosphoserine" evidence="3">
    <location>
        <position position="554"/>
    </location>
</feature>
<feature type="modified residue" description="Phosphoserine" evidence="13">
    <location>
        <position position="575"/>
    </location>
</feature>
<accession>P0C643</accession>
<evidence type="ECO:0000250" key="1"/>
<evidence type="ECO:0000250" key="2">
    <source>
        <dbReference type="UniProtKB" id="Q7LDG7"/>
    </source>
</evidence>
<evidence type="ECO:0000250" key="3">
    <source>
        <dbReference type="UniProtKB" id="Q9QUG9"/>
    </source>
</evidence>
<evidence type="ECO:0000255" key="4">
    <source>
        <dbReference type="PROSITE-ProRule" id="PRU00135"/>
    </source>
</evidence>
<evidence type="ECO:0000255" key="5">
    <source>
        <dbReference type="PROSITE-ProRule" id="PRU00168"/>
    </source>
</evidence>
<evidence type="ECO:0000255" key="6">
    <source>
        <dbReference type="PROSITE-ProRule" id="PRU00226"/>
    </source>
</evidence>
<evidence type="ECO:0000255" key="7">
    <source>
        <dbReference type="PROSITE-ProRule" id="PRU00448"/>
    </source>
</evidence>
<evidence type="ECO:0000256" key="8">
    <source>
        <dbReference type="SAM" id="MobiDB-lite"/>
    </source>
</evidence>
<evidence type="ECO:0000269" key="9">
    <source>
    </source>
</evidence>
<evidence type="ECO:0000269" key="10">
    <source>
    </source>
</evidence>
<evidence type="ECO:0000269" key="11">
    <source>
    </source>
</evidence>
<evidence type="ECO:0000305" key="12"/>
<evidence type="ECO:0007744" key="13">
    <source>
    </source>
</evidence>
<organism>
    <name type="scientific">Rattus norvegicus</name>
    <name type="common">Rat</name>
    <dbReference type="NCBI Taxonomy" id="10116"/>
    <lineage>
        <taxon>Eukaryota</taxon>
        <taxon>Metazoa</taxon>
        <taxon>Chordata</taxon>
        <taxon>Craniata</taxon>
        <taxon>Vertebrata</taxon>
        <taxon>Euteleostomi</taxon>
        <taxon>Mammalia</taxon>
        <taxon>Eutheria</taxon>
        <taxon>Euarchontoglires</taxon>
        <taxon>Glires</taxon>
        <taxon>Rodentia</taxon>
        <taxon>Myomorpha</taxon>
        <taxon>Muroidea</taxon>
        <taxon>Muridae</taxon>
        <taxon>Murinae</taxon>
        <taxon>Rattus</taxon>
    </lineage>
</organism>
<dbReference type="EMBL" id="AABR03006336">
    <property type="status" value="NOT_ANNOTATED_CDS"/>
    <property type="molecule type" value="Genomic_DNA"/>
</dbReference>
<dbReference type="EMBL" id="AABR03008223">
    <property type="status" value="NOT_ANNOTATED_CDS"/>
    <property type="molecule type" value="Genomic_DNA"/>
</dbReference>
<dbReference type="EMBL" id="AABR03009977">
    <property type="status" value="NOT_ANNOTATED_CDS"/>
    <property type="molecule type" value="Genomic_DNA"/>
</dbReference>
<dbReference type="EMBL" id="AABR03011305">
    <property type="status" value="NOT_ANNOTATED_CDS"/>
    <property type="molecule type" value="Genomic_DNA"/>
</dbReference>
<dbReference type="RefSeq" id="NP_001076446.1">
    <property type="nucleotide sequence ID" value="NM_001082977.1"/>
</dbReference>
<dbReference type="BMRB" id="P0C643"/>
<dbReference type="SMR" id="P0C643"/>
<dbReference type="FunCoup" id="P0C643">
    <property type="interactions" value="635"/>
</dbReference>
<dbReference type="STRING" id="10116.ENSRNOP00000028646"/>
<dbReference type="iPTMnet" id="P0C643"/>
<dbReference type="PhosphoSitePlus" id="P0C643"/>
<dbReference type="SwissPalm" id="P0C643"/>
<dbReference type="PaxDb" id="10116-ENSRNOP00000028646"/>
<dbReference type="GeneID" id="361714"/>
<dbReference type="KEGG" id="rno:361714"/>
<dbReference type="UCSC" id="RGD:1311630">
    <property type="organism name" value="rat"/>
</dbReference>
<dbReference type="AGR" id="RGD:1311630"/>
<dbReference type="CTD" id="10235"/>
<dbReference type="RGD" id="1311630">
    <property type="gene designation" value="Rasgrp2"/>
</dbReference>
<dbReference type="eggNOG" id="KOG3417">
    <property type="taxonomic scope" value="Eukaryota"/>
</dbReference>
<dbReference type="InParanoid" id="P0C643"/>
<dbReference type="PhylomeDB" id="P0C643"/>
<dbReference type="TreeFam" id="TF312918"/>
<dbReference type="Reactome" id="R-RNO-354192">
    <property type="pathway name" value="Integrin signaling"/>
</dbReference>
<dbReference type="Reactome" id="R-RNO-392517">
    <property type="pathway name" value="Rap1 signalling"/>
</dbReference>
<dbReference type="PRO" id="PR:P0C643"/>
<dbReference type="Proteomes" id="UP000002494">
    <property type="component" value="Unplaced"/>
</dbReference>
<dbReference type="GO" id="GO:0005829">
    <property type="term" value="C:cytosol"/>
    <property type="evidence" value="ECO:0000266"/>
    <property type="project" value="RGD"/>
</dbReference>
<dbReference type="GO" id="GO:0043005">
    <property type="term" value="C:neuron projection"/>
    <property type="evidence" value="ECO:0007669"/>
    <property type="project" value="UniProtKB-KW"/>
</dbReference>
<dbReference type="GO" id="GO:0005886">
    <property type="term" value="C:plasma membrane"/>
    <property type="evidence" value="ECO:0000266"/>
    <property type="project" value="RGD"/>
</dbReference>
<dbReference type="GO" id="GO:0032587">
    <property type="term" value="C:ruffle membrane"/>
    <property type="evidence" value="ECO:0007669"/>
    <property type="project" value="UniProtKB-SubCell"/>
</dbReference>
<dbReference type="GO" id="GO:0045202">
    <property type="term" value="C:synapse"/>
    <property type="evidence" value="ECO:0007669"/>
    <property type="project" value="UniProtKB-SubCell"/>
</dbReference>
<dbReference type="GO" id="GO:0005509">
    <property type="term" value="F:calcium ion binding"/>
    <property type="evidence" value="ECO:0007669"/>
    <property type="project" value="InterPro"/>
</dbReference>
<dbReference type="GO" id="GO:0005085">
    <property type="term" value="F:guanyl-nucleotide exchange factor activity"/>
    <property type="evidence" value="ECO:0000266"/>
    <property type="project" value="RGD"/>
</dbReference>
<dbReference type="GO" id="GO:0008270">
    <property type="term" value="F:zinc ion binding"/>
    <property type="evidence" value="ECO:0007669"/>
    <property type="project" value="UniProtKB-KW"/>
</dbReference>
<dbReference type="GO" id="GO:0071277">
    <property type="term" value="P:cellular response to calcium ion"/>
    <property type="evidence" value="ECO:0000266"/>
    <property type="project" value="RGD"/>
</dbReference>
<dbReference type="GO" id="GO:0007265">
    <property type="term" value="P:Ras protein signal transduction"/>
    <property type="evidence" value="ECO:0000318"/>
    <property type="project" value="GO_Central"/>
</dbReference>
<dbReference type="CDD" id="cd20861">
    <property type="entry name" value="C1_RASGRP2"/>
    <property type="match status" value="1"/>
</dbReference>
<dbReference type="CDD" id="cd00051">
    <property type="entry name" value="EFh"/>
    <property type="match status" value="1"/>
</dbReference>
<dbReference type="CDD" id="cd00155">
    <property type="entry name" value="RasGEF"/>
    <property type="match status" value="1"/>
</dbReference>
<dbReference type="CDD" id="cd06224">
    <property type="entry name" value="REM"/>
    <property type="match status" value="1"/>
</dbReference>
<dbReference type="FunFam" id="3.30.60.20:FF:000023">
    <property type="entry name" value="RAS guanyl-releasing protein 1 isoform X1"/>
    <property type="match status" value="1"/>
</dbReference>
<dbReference type="FunFam" id="1.20.870.10:FF:000011">
    <property type="entry name" value="RAS guanyl-releasing protein 2 isoform X1"/>
    <property type="match status" value="1"/>
</dbReference>
<dbReference type="FunFam" id="1.10.840.10:FF:000003">
    <property type="entry name" value="Ras guanyl-releasing protein 3 isoform 1"/>
    <property type="match status" value="1"/>
</dbReference>
<dbReference type="Gene3D" id="3.30.60.20">
    <property type="match status" value="1"/>
</dbReference>
<dbReference type="Gene3D" id="1.10.238.10">
    <property type="entry name" value="EF-hand"/>
    <property type="match status" value="1"/>
</dbReference>
<dbReference type="Gene3D" id="1.10.840.10">
    <property type="entry name" value="Ras guanine-nucleotide exchange factors catalytic domain"/>
    <property type="match status" value="1"/>
</dbReference>
<dbReference type="Gene3D" id="1.20.870.10">
    <property type="entry name" value="Son of sevenless (SoS) protein Chain: S domain 1"/>
    <property type="match status" value="1"/>
</dbReference>
<dbReference type="InterPro" id="IPR046349">
    <property type="entry name" value="C1-like_sf"/>
</dbReference>
<dbReference type="InterPro" id="IPR011992">
    <property type="entry name" value="EF-hand-dom_pair"/>
</dbReference>
<dbReference type="InterPro" id="IPR018247">
    <property type="entry name" value="EF_Hand_1_Ca_BS"/>
</dbReference>
<dbReference type="InterPro" id="IPR002048">
    <property type="entry name" value="EF_hand_dom"/>
</dbReference>
<dbReference type="InterPro" id="IPR002219">
    <property type="entry name" value="PE/DAG-bd"/>
</dbReference>
<dbReference type="InterPro" id="IPR008937">
    <property type="entry name" value="Ras-like_GEF"/>
</dbReference>
<dbReference type="InterPro" id="IPR000651">
    <property type="entry name" value="Ras-like_Gua-exchang_fac_N"/>
</dbReference>
<dbReference type="InterPro" id="IPR023578">
    <property type="entry name" value="Ras_GEF_dom_sf"/>
</dbReference>
<dbReference type="InterPro" id="IPR001895">
    <property type="entry name" value="RASGEF_cat_dom"/>
</dbReference>
<dbReference type="InterPro" id="IPR036964">
    <property type="entry name" value="RASGEF_cat_dom_sf"/>
</dbReference>
<dbReference type="PANTHER" id="PTHR23113">
    <property type="entry name" value="GUANINE NUCLEOTIDE EXCHANGE FACTOR"/>
    <property type="match status" value="1"/>
</dbReference>
<dbReference type="PANTHER" id="PTHR23113:SF16">
    <property type="entry name" value="RAS GUANYL-RELEASING PROTEIN 2"/>
    <property type="match status" value="1"/>
</dbReference>
<dbReference type="Pfam" id="PF00130">
    <property type="entry name" value="C1_1"/>
    <property type="match status" value="1"/>
</dbReference>
<dbReference type="Pfam" id="PF13499">
    <property type="entry name" value="EF-hand_7"/>
    <property type="match status" value="1"/>
</dbReference>
<dbReference type="Pfam" id="PF00617">
    <property type="entry name" value="RasGEF"/>
    <property type="match status" value="1"/>
</dbReference>
<dbReference type="Pfam" id="PF00618">
    <property type="entry name" value="RasGEF_N"/>
    <property type="match status" value="1"/>
</dbReference>
<dbReference type="SMART" id="SM00109">
    <property type="entry name" value="C1"/>
    <property type="match status" value="1"/>
</dbReference>
<dbReference type="SMART" id="SM00054">
    <property type="entry name" value="EFh"/>
    <property type="match status" value="2"/>
</dbReference>
<dbReference type="SMART" id="SM00147">
    <property type="entry name" value="RasGEF"/>
    <property type="match status" value="1"/>
</dbReference>
<dbReference type="SMART" id="SM00229">
    <property type="entry name" value="RasGEFN"/>
    <property type="match status" value="1"/>
</dbReference>
<dbReference type="SUPFAM" id="SSF57889">
    <property type="entry name" value="Cysteine-rich domain"/>
    <property type="match status" value="1"/>
</dbReference>
<dbReference type="SUPFAM" id="SSF47473">
    <property type="entry name" value="EF-hand"/>
    <property type="match status" value="1"/>
</dbReference>
<dbReference type="SUPFAM" id="SSF48366">
    <property type="entry name" value="Ras GEF"/>
    <property type="match status" value="1"/>
</dbReference>
<dbReference type="PROSITE" id="PS00018">
    <property type="entry name" value="EF_HAND_1"/>
    <property type="match status" value="2"/>
</dbReference>
<dbReference type="PROSITE" id="PS50222">
    <property type="entry name" value="EF_HAND_2"/>
    <property type="match status" value="2"/>
</dbReference>
<dbReference type="PROSITE" id="PS50009">
    <property type="entry name" value="RASGEF_CAT"/>
    <property type="match status" value="1"/>
</dbReference>
<dbReference type="PROSITE" id="PS50212">
    <property type="entry name" value="RASGEF_NTER"/>
    <property type="match status" value="1"/>
</dbReference>
<dbReference type="PROSITE" id="PS00479">
    <property type="entry name" value="ZF_DAG_PE_1"/>
    <property type="match status" value="1"/>
</dbReference>
<dbReference type="PROSITE" id="PS50081">
    <property type="entry name" value="ZF_DAG_PE_2"/>
    <property type="match status" value="1"/>
</dbReference>
<name>GRP2_RAT</name>
<keyword id="KW-0106">Calcium</keyword>
<keyword id="KW-1003">Cell membrane</keyword>
<keyword id="KW-0966">Cell projection</keyword>
<keyword id="KW-0963">Cytoplasm</keyword>
<keyword id="KW-0344">Guanine-nucleotide releasing factor</keyword>
<keyword id="KW-0472">Membrane</keyword>
<keyword id="KW-0479">Metal-binding</keyword>
<keyword id="KW-0597">Phosphoprotein</keyword>
<keyword id="KW-1185">Reference proteome</keyword>
<keyword id="KW-0677">Repeat</keyword>
<keyword id="KW-0770">Synapse</keyword>
<keyword id="KW-0771">Synaptosome</keyword>
<keyword id="KW-0862">Zinc</keyword>
<keyword id="KW-0863">Zinc-finger</keyword>
<proteinExistence type="evidence at protein level"/>